<proteinExistence type="inferred from homology"/>
<reference key="1">
    <citation type="journal article" date="2005" name="Infect. Immun.">
        <title>Whole-genome analyses of speciation events in pathogenic Brucellae.</title>
        <authorList>
            <person name="Chain P.S."/>
            <person name="Comerci D.J."/>
            <person name="Tolmasky M.E."/>
            <person name="Larimer F.W."/>
            <person name="Malfatti S.A."/>
            <person name="Vergez L.M."/>
            <person name="Aguero F."/>
            <person name="Land M.L."/>
            <person name="Ugalde R.A."/>
            <person name="Garcia E."/>
        </authorList>
    </citation>
    <scope>NUCLEOTIDE SEQUENCE [LARGE SCALE GENOMIC DNA]</scope>
    <source>
        <strain>2308</strain>
    </source>
</reference>
<dbReference type="EC" id="2.7.7.56" evidence="1"/>
<dbReference type="EMBL" id="AM040264">
    <property type="protein sequence ID" value="CAJ10128.1"/>
    <property type="molecule type" value="Genomic_DNA"/>
</dbReference>
<dbReference type="RefSeq" id="WP_002965421.1">
    <property type="nucleotide sequence ID" value="NZ_KN046823.1"/>
</dbReference>
<dbReference type="SMR" id="Q2YP33"/>
<dbReference type="STRING" id="359391.BAB1_0172"/>
<dbReference type="GeneID" id="97534418"/>
<dbReference type="KEGG" id="bmf:BAB1_0172"/>
<dbReference type="PATRIC" id="fig|359391.11.peg.1596"/>
<dbReference type="HOGENOM" id="CLU_050858_0_0_5"/>
<dbReference type="PhylomeDB" id="Q2YP33"/>
<dbReference type="Proteomes" id="UP000002719">
    <property type="component" value="Chromosome I"/>
</dbReference>
<dbReference type="GO" id="GO:0000175">
    <property type="term" value="F:3'-5'-RNA exonuclease activity"/>
    <property type="evidence" value="ECO:0007669"/>
    <property type="project" value="UniProtKB-UniRule"/>
</dbReference>
<dbReference type="GO" id="GO:0000049">
    <property type="term" value="F:tRNA binding"/>
    <property type="evidence" value="ECO:0007669"/>
    <property type="project" value="UniProtKB-UniRule"/>
</dbReference>
<dbReference type="GO" id="GO:0009022">
    <property type="term" value="F:tRNA nucleotidyltransferase activity"/>
    <property type="evidence" value="ECO:0007669"/>
    <property type="project" value="UniProtKB-UniRule"/>
</dbReference>
<dbReference type="GO" id="GO:0016075">
    <property type="term" value="P:rRNA catabolic process"/>
    <property type="evidence" value="ECO:0007669"/>
    <property type="project" value="UniProtKB-UniRule"/>
</dbReference>
<dbReference type="GO" id="GO:0006364">
    <property type="term" value="P:rRNA processing"/>
    <property type="evidence" value="ECO:0007669"/>
    <property type="project" value="UniProtKB-KW"/>
</dbReference>
<dbReference type="GO" id="GO:0008033">
    <property type="term" value="P:tRNA processing"/>
    <property type="evidence" value="ECO:0007669"/>
    <property type="project" value="UniProtKB-UniRule"/>
</dbReference>
<dbReference type="CDD" id="cd11362">
    <property type="entry name" value="RNase_PH_bact"/>
    <property type="match status" value="1"/>
</dbReference>
<dbReference type="FunFam" id="3.30.230.70:FF:000003">
    <property type="entry name" value="Ribonuclease PH"/>
    <property type="match status" value="1"/>
</dbReference>
<dbReference type="Gene3D" id="3.30.230.70">
    <property type="entry name" value="GHMP Kinase, N-terminal domain"/>
    <property type="match status" value="1"/>
</dbReference>
<dbReference type="HAMAP" id="MF_00564">
    <property type="entry name" value="RNase_PH"/>
    <property type="match status" value="1"/>
</dbReference>
<dbReference type="InterPro" id="IPR001247">
    <property type="entry name" value="ExoRNase_PH_dom1"/>
</dbReference>
<dbReference type="InterPro" id="IPR015847">
    <property type="entry name" value="ExoRNase_PH_dom2"/>
</dbReference>
<dbReference type="InterPro" id="IPR036345">
    <property type="entry name" value="ExoRNase_PH_dom2_sf"/>
</dbReference>
<dbReference type="InterPro" id="IPR027408">
    <property type="entry name" value="PNPase/RNase_PH_dom_sf"/>
</dbReference>
<dbReference type="InterPro" id="IPR020568">
    <property type="entry name" value="Ribosomal_Su5_D2-typ_SF"/>
</dbReference>
<dbReference type="InterPro" id="IPR050080">
    <property type="entry name" value="RNase_PH"/>
</dbReference>
<dbReference type="InterPro" id="IPR002381">
    <property type="entry name" value="RNase_PH_bac-type"/>
</dbReference>
<dbReference type="InterPro" id="IPR018336">
    <property type="entry name" value="RNase_PH_CS"/>
</dbReference>
<dbReference type="NCBIfam" id="TIGR01966">
    <property type="entry name" value="RNasePH"/>
    <property type="match status" value="1"/>
</dbReference>
<dbReference type="PANTHER" id="PTHR11953">
    <property type="entry name" value="EXOSOME COMPLEX COMPONENT"/>
    <property type="match status" value="1"/>
</dbReference>
<dbReference type="PANTHER" id="PTHR11953:SF0">
    <property type="entry name" value="EXOSOME COMPLEX COMPONENT RRP41"/>
    <property type="match status" value="1"/>
</dbReference>
<dbReference type="Pfam" id="PF01138">
    <property type="entry name" value="RNase_PH"/>
    <property type="match status" value="1"/>
</dbReference>
<dbReference type="Pfam" id="PF03725">
    <property type="entry name" value="RNase_PH_C"/>
    <property type="match status" value="1"/>
</dbReference>
<dbReference type="SUPFAM" id="SSF55666">
    <property type="entry name" value="Ribonuclease PH domain 2-like"/>
    <property type="match status" value="1"/>
</dbReference>
<dbReference type="SUPFAM" id="SSF54211">
    <property type="entry name" value="Ribosomal protein S5 domain 2-like"/>
    <property type="match status" value="1"/>
</dbReference>
<dbReference type="PROSITE" id="PS01277">
    <property type="entry name" value="RIBONUCLEASE_PH"/>
    <property type="match status" value="1"/>
</dbReference>
<name>RNPH_BRUA2</name>
<gene>
    <name evidence="1" type="primary">rph</name>
    <name type="ordered locus">BAB1_0172</name>
</gene>
<comment type="function">
    <text evidence="1">Phosphorolytic 3'-5' exoribonuclease that plays an important role in tRNA 3'-end maturation. Removes nucleotide residues following the 3'-CCA terminus of tRNAs; can also add nucleotides to the ends of RNA molecules by using nucleoside diphosphates as substrates, but this may not be physiologically important. Probably plays a role in initiation of 16S rRNA degradation (leading to ribosome degradation) during starvation.</text>
</comment>
<comment type="catalytic activity">
    <reaction evidence="1">
        <text>tRNA(n+1) + phosphate = tRNA(n) + a ribonucleoside 5'-diphosphate</text>
        <dbReference type="Rhea" id="RHEA:10628"/>
        <dbReference type="Rhea" id="RHEA-COMP:17343"/>
        <dbReference type="Rhea" id="RHEA-COMP:17344"/>
        <dbReference type="ChEBI" id="CHEBI:43474"/>
        <dbReference type="ChEBI" id="CHEBI:57930"/>
        <dbReference type="ChEBI" id="CHEBI:173114"/>
        <dbReference type="EC" id="2.7.7.56"/>
    </reaction>
</comment>
<comment type="subunit">
    <text evidence="1">Homohexameric ring arranged as a trimer of dimers.</text>
</comment>
<comment type="similarity">
    <text evidence="1">Belongs to the RNase PH family.</text>
</comment>
<accession>Q2YP33</accession>
<evidence type="ECO:0000255" key="1">
    <source>
        <dbReference type="HAMAP-Rule" id="MF_00564"/>
    </source>
</evidence>
<feature type="chain" id="PRO_1000024780" description="Ribonuclease PH">
    <location>
        <begin position="1"/>
        <end position="238"/>
    </location>
</feature>
<feature type="binding site" evidence="1">
    <location>
        <position position="86"/>
    </location>
    <ligand>
        <name>phosphate</name>
        <dbReference type="ChEBI" id="CHEBI:43474"/>
        <note>substrate</note>
    </ligand>
</feature>
<feature type="binding site" evidence="1">
    <location>
        <begin position="124"/>
        <end position="126"/>
    </location>
    <ligand>
        <name>phosphate</name>
        <dbReference type="ChEBI" id="CHEBI:43474"/>
        <note>substrate</note>
    </ligand>
</feature>
<sequence>MRPSKRAADEMRAISFERGVSKHAEGSCLVKFGDTHVLCTASLEEKVPGWMRNTGKGWVTAEYGMLPRSTGERMRREAAAGKQGGRTQEIQRLIGRSLRAVVDMQALGEMQITVDCDVIQADGGTRTAAITGGWVALHECLRWMEARQMVRVEKVLKDHVAAISCGIYEGVPVLDLDYAEDSVAETDSNFVMTGKGGIVEIQGTAEGVPFSEEEFGALMKLARSGIDRLVSLQKMAVA</sequence>
<protein>
    <recommendedName>
        <fullName evidence="1">Ribonuclease PH</fullName>
        <shortName evidence="1">RNase PH</shortName>
        <ecNumber evidence="1">2.7.7.56</ecNumber>
    </recommendedName>
    <alternativeName>
        <fullName evidence="1">tRNA nucleotidyltransferase</fullName>
    </alternativeName>
</protein>
<keyword id="KW-0548">Nucleotidyltransferase</keyword>
<keyword id="KW-1185">Reference proteome</keyword>
<keyword id="KW-0694">RNA-binding</keyword>
<keyword id="KW-0698">rRNA processing</keyword>
<keyword id="KW-0808">Transferase</keyword>
<keyword id="KW-0819">tRNA processing</keyword>
<keyword id="KW-0820">tRNA-binding</keyword>
<organism>
    <name type="scientific">Brucella abortus (strain 2308)</name>
    <dbReference type="NCBI Taxonomy" id="359391"/>
    <lineage>
        <taxon>Bacteria</taxon>
        <taxon>Pseudomonadati</taxon>
        <taxon>Pseudomonadota</taxon>
        <taxon>Alphaproteobacteria</taxon>
        <taxon>Hyphomicrobiales</taxon>
        <taxon>Brucellaceae</taxon>
        <taxon>Brucella/Ochrobactrum group</taxon>
        <taxon>Brucella</taxon>
    </lineage>
</organism>